<sequence>MAFNFNWSPLTADASFYKRARDLLTTALNKSPKPPIIVDDILVTEFNLGSVPPELEILEIGDLAEDRFRGIFKMTYSGDAFLTLKTRVQANPLNTYLYSKPSFTSPEPLAAASGLTIPLQITLSEIKLSAFIILVFSKQKGLTLVFRNDPLESLKVSSTFDSIQFVRDYLQRTIEGKLRNLMMDELPAIIHKLSLQLWCPEQMSKEDHEKTNEMDEQAVNPFASPPLDAVDAHGNLLDPIDISSIAVNGGAELQSLFSQKNLFRLGNLVNTQLTSSLFTPSVPEVIFRAKAGPVDKPEASSTTPLTTPSLVKSHSFHGTSTVYTFSDTSSQNNGQLPSRPSLVSLGSATTGLGLAASRNAKPYANRKKKTRVVNLRRKTDTAASSEMGDTMSDSASVQASESITMSDSIPEDPEEQPELTMSGSSRVRFGLGGERSALPQRPALRRDLFNPDEATASAEISQPQVARSTPEKETAAPVRTSENDKRSDSKRRGPRSETPSVILEQAWIMKMAGEIAKRVYDEKQRNPSFWDEREDSPPPAYEAQPTTAAS</sequence>
<comment type="function">
    <text evidence="1">Component of the ERMES/MDM complex, which serves as a molecular tether to connect the endoplasmic reticulum (ER) and mitochondria. Components of this complex are involved in the control of mitochondrial shape and protein biogenesis, and function in nonvesicular lipid trafficking between the ER and mitochondria. MDM34 is required for the interaction of the ER-resident membrane protein MMM1 and the outer mitochondrial membrane-resident beta-barrel protein MDM10.</text>
</comment>
<comment type="subunit">
    <text evidence="1">Component of the ER-mitochondria encounter structure (ERMES) or MDM complex, composed of MMM1, MDM10, MDM12 and MDM34.</text>
</comment>
<comment type="subcellular location">
    <subcellularLocation>
        <location evidence="1">Mitochondrion outer membrane</location>
        <topology evidence="1">Multi-pass membrane protein</topology>
    </subcellularLocation>
    <text evidence="1">The ERMES/MDM complex localizes to a few discrete foci (around 10 per single cell), that represent mitochondria-endoplasmic reticulum junctions. These foci are often found next to mtDNA nucleoids.</text>
</comment>
<comment type="domain">
    <text evidence="1">Lacks alpha-helical transmembrane segments, suggesting that it resides in the membrane via beta-sheet conformations similar to those predicted for other outer membrane proteins and porin.</text>
</comment>
<comment type="domain">
    <text evidence="1">The SMP-LTD domain is a barrel-like domain that can bind various types of glycerophospholipids in its interior and mediate their transfer between two adjacent bilayers.</text>
</comment>
<comment type="similarity">
    <text evidence="1">Belongs to the MDM34 family.</text>
</comment>
<keyword id="KW-0445">Lipid transport</keyword>
<keyword id="KW-0446">Lipid-binding</keyword>
<keyword id="KW-0472">Membrane</keyword>
<keyword id="KW-0496">Mitochondrion</keyword>
<keyword id="KW-1000">Mitochondrion outer membrane</keyword>
<keyword id="KW-1185">Reference proteome</keyword>
<keyword id="KW-0812">Transmembrane</keyword>
<keyword id="KW-1134">Transmembrane beta strand</keyword>
<keyword id="KW-0813">Transport</keyword>
<reference key="1">
    <citation type="journal article" date="2005" name="Nature">
        <title>The genome sequence of the rice blast fungus Magnaporthe grisea.</title>
        <authorList>
            <person name="Dean R.A."/>
            <person name="Talbot N.J."/>
            <person name="Ebbole D.J."/>
            <person name="Farman M.L."/>
            <person name="Mitchell T.K."/>
            <person name="Orbach M.J."/>
            <person name="Thon M.R."/>
            <person name="Kulkarni R."/>
            <person name="Xu J.-R."/>
            <person name="Pan H."/>
            <person name="Read N.D."/>
            <person name="Lee Y.-H."/>
            <person name="Carbone I."/>
            <person name="Brown D."/>
            <person name="Oh Y.Y."/>
            <person name="Donofrio N."/>
            <person name="Jeong J.S."/>
            <person name="Soanes D.M."/>
            <person name="Djonovic S."/>
            <person name="Kolomiets E."/>
            <person name="Rehmeyer C."/>
            <person name="Li W."/>
            <person name="Harding M."/>
            <person name="Kim S."/>
            <person name="Lebrun M.-H."/>
            <person name="Bohnert H."/>
            <person name="Coughlan S."/>
            <person name="Butler J."/>
            <person name="Calvo S.E."/>
            <person name="Ma L.-J."/>
            <person name="Nicol R."/>
            <person name="Purcell S."/>
            <person name="Nusbaum C."/>
            <person name="Galagan J.E."/>
            <person name="Birren B.W."/>
        </authorList>
    </citation>
    <scope>NUCLEOTIDE SEQUENCE [LARGE SCALE GENOMIC DNA]</scope>
    <source>
        <strain>70-15 / ATCC MYA-4617 / FGSC 8958</strain>
    </source>
</reference>
<feature type="chain" id="PRO_0000384347" description="Mitochondrial distribution and morphology protein 34">
    <location>
        <begin position="1"/>
        <end position="550"/>
    </location>
</feature>
<feature type="domain" description="SMP-LTD" evidence="1">
    <location>
        <begin position="1"/>
        <end position="208"/>
    </location>
</feature>
<feature type="region of interest" description="Disordered" evidence="2">
    <location>
        <begin position="294"/>
        <end position="313"/>
    </location>
</feature>
<feature type="region of interest" description="Disordered" evidence="2">
    <location>
        <begin position="358"/>
        <end position="505"/>
    </location>
</feature>
<feature type="region of interest" description="Disordered" evidence="2">
    <location>
        <begin position="519"/>
        <end position="550"/>
    </location>
</feature>
<feature type="compositionally biased region" description="Low complexity" evidence="2">
    <location>
        <begin position="300"/>
        <end position="310"/>
    </location>
</feature>
<feature type="compositionally biased region" description="Basic residues" evidence="2">
    <location>
        <begin position="364"/>
        <end position="376"/>
    </location>
</feature>
<feature type="compositionally biased region" description="Polar residues" evidence="2">
    <location>
        <begin position="391"/>
        <end position="407"/>
    </location>
</feature>
<feature type="compositionally biased region" description="Polar residues" evidence="2">
    <location>
        <begin position="458"/>
        <end position="467"/>
    </location>
</feature>
<feature type="compositionally biased region" description="Basic and acidic residues" evidence="2">
    <location>
        <begin position="481"/>
        <end position="495"/>
    </location>
</feature>
<protein>
    <recommendedName>
        <fullName evidence="1">Mitochondrial distribution and morphology protein 34</fullName>
    </recommendedName>
</protein>
<evidence type="ECO:0000255" key="1">
    <source>
        <dbReference type="HAMAP-Rule" id="MF_03105"/>
    </source>
</evidence>
<evidence type="ECO:0000256" key="2">
    <source>
        <dbReference type="SAM" id="MobiDB-lite"/>
    </source>
</evidence>
<gene>
    <name evidence="1" type="primary">MDM34</name>
    <name type="ORF">MGG_05176</name>
</gene>
<proteinExistence type="inferred from homology"/>
<accession>A4QT54</accession>
<accession>G4N4Z7</accession>
<dbReference type="EMBL" id="CM001233">
    <property type="protein sequence ID" value="EHA52908.1"/>
    <property type="molecule type" value="Genomic_DNA"/>
</dbReference>
<dbReference type="RefSeq" id="XP_003712715.1">
    <property type="nucleotide sequence ID" value="XM_003712667.1"/>
</dbReference>
<dbReference type="SMR" id="A4QT54"/>
<dbReference type="FunCoup" id="A4QT54">
    <property type="interactions" value="54"/>
</dbReference>
<dbReference type="STRING" id="242507.A4QT54"/>
<dbReference type="EnsemblFungi" id="MGG_05176T0">
    <property type="protein sequence ID" value="MGG_05176T0"/>
    <property type="gene ID" value="MGG_05176"/>
</dbReference>
<dbReference type="GeneID" id="2675592"/>
<dbReference type="KEGG" id="mgr:MGG_05176"/>
<dbReference type="VEuPathDB" id="FungiDB:MGG_05176"/>
<dbReference type="eggNOG" id="ENOG502QT3W">
    <property type="taxonomic scope" value="Eukaryota"/>
</dbReference>
<dbReference type="HOGENOM" id="CLU_036502_1_0_1"/>
<dbReference type="InParanoid" id="A4QT54"/>
<dbReference type="OMA" id="VFRAWSG"/>
<dbReference type="OrthoDB" id="17927at2759"/>
<dbReference type="Proteomes" id="UP000009058">
    <property type="component" value="Chromosome 3"/>
</dbReference>
<dbReference type="GO" id="GO:0005737">
    <property type="term" value="C:cytoplasm"/>
    <property type="evidence" value="ECO:0000250"/>
    <property type="project" value="PAMGO_MGG"/>
</dbReference>
<dbReference type="GO" id="GO:0032865">
    <property type="term" value="C:ERMES complex"/>
    <property type="evidence" value="ECO:0007669"/>
    <property type="project" value="UniProtKB-UniRule"/>
</dbReference>
<dbReference type="GO" id="GO:0005741">
    <property type="term" value="C:mitochondrial outer membrane"/>
    <property type="evidence" value="ECO:0000250"/>
    <property type="project" value="PAMGO_MGG"/>
</dbReference>
<dbReference type="GO" id="GO:0005739">
    <property type="term" value="C:mitochondrion"/>
    <property type="evidence" value="ECO:0000250"/>
    <property type="project" value="PAMGO_MGG"/>
</dbReference>
<dbReference type="GO" id="GO:0008289">
    <property type="term" value="F:lipid binding"/>
    <property type="evidence" value="ECO:0007669"/>
    <property type="project" value="UniProtKB-KW"/>
</dbReference>
<dbReference type="GO" id="GO:0000002">
    <property type="term" value="P:mitochondrial genome maintenance"/>
    <property type="evidence" value="ECO:0007669"/>
    <property type="project" value="UniProtKB-UniRule"/>
</dbReference>
<dbReference type="GO" id="GO:0007005">
    <property type="term" value="P:mitochondrion organization"/>
    <property type="evidence" value="ECO:0000250"/>
    <property type="project" value="PAMGO_MGG"/>
</dbReference>
<dbReference type="GO" id="GO:1990456">
    <property type="term" value="P:mitochondrion-endoplasmic reticulum membrane tethering"/>
    <property type="evidence" value="ECO:0007669"/>
    <property type="project" value="TreeGrafter"/>
</dbReference>
<dbReference type="GO" id="GO:0015914">
    <property type="term" value="P:phospholipid transport"/>
    <property type="evidence" value="ECO:0007669"/>
    <property type="project" value="TreeGrafter"/>
</dbReference>
<dbReference type="CDD" id="cd21673">
    <property type="entry name" value="SMP_Mdm34"/>
    <property type="match status" value="1"/>
</dbReference>
<dbReference type="HAMAP" id="MF_03105">
    <property type="entry name" value="Mdm34"/>
    <property type="match status" value="1"/>
</dbReference>
<dbReference type="InterPro" id="IPR027536">
    <property type="entry name" value="Mdm34"/>
</dbReference>
<dbReference type="InterPro" id="IPR031468">
    <property type="entry name" value="SMP_LBD"/>
</dbReference>
<dbReference type="PANTHER" id="PTHR28185">
    <property type="entry name" value="MITOCHONDRIAL DISTRIBUTION AND MORPHOLOGY PROTEIN 34"/>
    <property type="match status" value="1"/>
</dbReference>
<dbReference type="PANTHER" id="PTHR28185:SF1">
    <property type="entry name" value="MITOCHONDRIAL DISTRIBUTION AND MORPHOLOGY PROTEIN 34"/>
    <property type="match status" value="1"/>
</dbReference>
<dbReference type="PROSITE" id="PS51847">
    <property type="entry name" value="SMP"/>
    <property type="match status" value="1"/>
</dbReference>
<organism>
    <name type="scientific">Pyricularia oryzae (strain 70-15 / ATCC MYA-4617 / FGSC 8958)</name>
    <name type="common">Rice blast fungus</name>
    <name type="synonym">Magnaporthe oryzae</name>
    <dbReference type="NCBI Taxonomy" id="242507"/>
    <lineage>
        <taxon>Eukaryota</taxon>
        <taxon>Fungi</taxon>
        <taxon>Dikarya</taxon>
        <taxon>Ascomycota</taxon>
        <taxon>Pezizomycotina</taxon>
        <taxon>Sordariomycetes</taxon>
        <taxon>Sordariomycetidae</taxon>
        <taxon>Magnaporthales</taxon>
        <taxon>Pyriculariaceae</taxon>
        <taxon>Pyricularia</taxon>
    </lineage>
</organism>
<name>MDM34_PYRO7</name>